<comment type="function">
    <text evidence="1">Catalyzes the conversion of dihydroorotate to orotate with quinone as electron acceptor.</text>
</comment>
<comment type="catalytic activity">
    <reaction evidence="1">
        <text>(S)-dihydroorotate + a quinone = orotate + a quinol</text>
        <dbReference type="Rhea" id="RHEA:30187"/>
        <dbReference type="ChEBI" id="CHEBI:24646"/>
        <dbReference type="ChEBI" id="CHEBI:30839"/>
        <dbReference type="ChEBI" id="CHEBI:30864"/>
        <dbReference type="ChEBI" id="CHEBI:132124"/>
        <dbReference type="EC" id="1.3.5.2"/>
    </reaction>
</comment>
<comment type="cofactor">
    <cofactor evidence="1">
        <name>FMN</name>
        <dbReference type="ChEBI" id="CHEBI:58210"/>
    </cofactor>
    <text evidence="1">Binds 1 FMN per subunit.</text>
</comment>
<comment type="pathway">
    <text evidence="1">Pyrimidine metabolism; UMP biosynthesis via de novo pathway; orotate from (S)-dihydroorotate (quinone route): step 1/1.</text>
</comment>
<comment type="subunit">
    <text evidence="1">Monomer.</text>
</comment>
<comment type="subcellular location">
    <subcellularLocation>
        <location evidence="1">Cell membrane</location>
        <topology evidence="1">Peripheral membrane protein</topology>
    </subcellularLocation>
</comment>
<comment type="similarity">
    <text evidence="1">Belongs to the dihydroorotate dehydrogenase family. Type 2 subfamily.</text>
</comment>
<organism>
    <name type="scientific">Escherichia coli (strain K12 / MC4100 / BW2952)</name>
    <dbReference type="NCBI Taxonomy" id="595496"/>
    <lineage>
        <taxon>Bacteria</taxon>
        <taxon>Pseudomonadati</taxon>
        <taxon>Pseudomonadota</taxon>
        <taxon>Gammaproteobacteria</taxon>
        <taxon>Enterobacterales</taxon>
        <taxon>Enterobacteriaceae</taxon>
        <taxon>Escherichia</taxon>
    </lineage>
</organism>
<name>PYRD_ECOBW</name>
<reference key="1">
    <citation type="journal article" date="2009" name="J. Bacteriol.">
        <title>Genomic sequencing reveals regulatory mutations and recombinational events in the widely used MC4100 lineage of Escherichia coli K-12.</title>
        <authorList>
            <person name="Ferenci T."/>
            <person name="Zhou Z."/>
            <person name="Betteridge T."/>
            <person name="Ren Y."/>
            <person name="Liu Y."/>
            <person name="Feng L."/>
            <person name="Reeves P.R."/>
            <person name="Wang L."/>
        </authorList>
    </citation>
    <scope>NUCLEOTIDE SEQUENCE [LARGE SCALE GENOMIC DNA]</scope>
    <source>
        <strain>K12 / MC4100 / BW2952</strain>
    </source>
</reference>
<protein>
    <recommendedName>
        <fullName evidence="1">Dihydroorotate dehydrogenase (quinone)</fullName>
        <ecNumber evidence="1">1.3.5.2</ecNumber>
    </recommendedName>
    <alternativeName>
        <fullName evidence="1">DHOdehase</fullName>
        <shortName evidence="1">DHOD</shortName>
        <shortName evidence="1">DHODase</shortName>
    </alternativeName>
    <alternativeName>
        <fullName evidence="1">Dihydroorotate oxidase</fullName>
    </alternativeName>
</protein>
<feature type="chain" id="PRO_1000204314" description="Dihydroorotate dehydrogenase (quinone)">
    <location>
        <begin position="1"/>
        <end position="336"/>
    </location>
</feature>
<feature type="active site" description="Nucleophile" evidence="1">
    <location>
        <position position="175"/>
    </location>
</feature>
<feature type="binding site" evidence="1">
    <location>
        <begin position="62"/>
        <end position="66"/>
    </location>
    <ligand>
        <name>FMN</name>
        <dbReference type="ChEBI" id="CHEBI:58210"/>
    </ligand>
</feature>
<feature type="binding site" evidence="1">
    <location>
        <position position="66"/>
    </location>
    <ligand>
        <name>substrate</name>
    </ligand>
</feature>
<feature type="binding site" evidence="1">
    <location>
        <position position="86"/>
    </location>
    <ligand>
        <name>FMN</name>
        <dbReference type="ChEBI" id="CHEBI:58210"/>
    </ligand>
</feature>
<feature type="binding site" evidence="1">
    <location>
        <begin position="111"/>
        <end position="115"/>
    </location>
    <ligand>
        <name>substrate</name>
    </ligand>
</feature>
<feature type="binding site" evidence="1">
    <location>
        <position position="139"/>
    </location>
    <ligand>
        <name>FMN</name>
        <dbReference type="ChEBI" id="CHEBI:58210"/>
    </ligand>
</feature>
<feature type="binding site" evidence="1">
    <location>
        <position position="172"/>
    </location>
    <ligand>
        <name>FMN</name>
        <dbReference type="ChEBI" id="CHEBI:58210"/>
    </ligand>
</feature>
<feature type="binding site" evidence="1">
    <location>
        <position position="172"/>
    </location>
    <ligand>
        <name>substrate</name>
    </ligand>
</feature>
<feature type="binding site" evidence="1">
    <location>
        <position position="177"/>
    </location>
    <ligand>
        <name>substrate</name>
    </ligand>
</feature>
<feature type="binding site" evidence="1">
    <location>
        <position position="217"/>
    </location>
    <ligand>
        <name>FMN</name>
        <dbReference type="ChEBI" id="CHEBI:58210"/>
    </ligand>
</feature>
<feature type="binding site" evidence="1">
    <location>
        <position position="245"/>
    </location>
    <ligand>
        <name>FMN</name>
        <dbReference type="ChEBI" id="CHEBI:58210"/>
    </ligand>
</feature>
<feature type="binding site" evidence="1">
    <location>
        <begin position="246"/>
        <end position="247"/>
    </location>
    <ligand>
        <name>substrate</name>
    </ligand>
</feature>
<feature type="binding site" evidence="1">
    <location>
        <position position="268"/>
    </location>
    <ligand>
        <name>FMN</name>
        <dbReference type="ChEBI" id="CHEBI:58210"/>
    </ligand>
</feature>
<feature type="binding site" evidence="1">
    <location>
        <position position="297"/>
    </location>
    <ligand>
        <name>FMN</name>
        <dbReference type="ChEBI" id="CHEBI:58210"/>
    </ligand>
</feature>
<feature type="binding site" evidence="1">
    <location>
        <begin position="318"/>
        <end position="319"/>
    </location>
    <ligand>
        <name>FMN</name>
        <dbReference type="ChEBI" id="CHEBI:58210"/>
    </ligand>
</feature>
<keyword id="KW-1003">Cell membrane</keyword>
<keyword id="KW-0285">Flavoprotein</keyword>
<keyword id="KW-0288">FMN</keyword>
<keyword id="KW-0472">Membrane</keyword>
<keyword id="KW-0560">Oxidoreductase</keyword>
<keyword id="KW-0665">Pyrimidine biosynthesis</keyword>
<sequence>MYYPFVRKALFQLDPERAHEFTFQQLRRITGTPFEALVRQKVPAKPVNCMGLTFKNPLGLAAGLDKDGECIDALGAMGFGSIEIGTVTPRPQPGNDKPRLFRLVDAEGLINRMGFNNLGVDNLVENVKKAHYDGVLGINIGKNKDTPVEQGKDDYLICMEKIYAYAGYIAINISSPNTPGLRTLQYGEALDDLLTAIKNKQNDLQAMHHKYVPIAVKIAPDLSEEELIQVADSLVRHNIDGVIATNTTLDRSLVQGMKNCDQTGGLSGRPLQLKSTEIIRRLSLELNGRLPIIGVGGIDSVIAAREKIAAGASLVQIYSGFIFKGPPLIKEIVTHI</sequence>
<dbReference type="EC" id="1.3.5.2" evidence="1"/>
<dbReference type="EMBL" id="CP001396">
    <property type="protein sequence ID" value="ACR62764.1"/>
    <property type="molecule type" value="Genomic_DNA"/>
</dbReference>
<dbReference type="RefSeq" id="WP_001295352.1">
    <property type="nucleotide sequence ID" value="NC_012759.1"/>
</dbReference>
<dbReference type="SMR" id="C4ZQ71"/>
<dbReference type="GeneID" id="93776469"/>
<dbReference type="KEGG" id="ebw:BWG_0797"/>
<dbReference type="HOGENOM" id="CLU_013640_2_0_6"/>
<dbReference type="UniPathway" id="UPA00070">
    <property type="reaction ID" value="UER00946"/>
</dbReference>
<dbReference type="GO" id="GO:0005737">
    <property type="term" value="C:cytoplasm"/>
    <property type="evidence" value="ECO:0007669"/>
    <property type="project" value="InterPro"/>
</dbReference>
<dbReference type="GO" id="GO:0005886">
    <property type="term" value="C:plasma membrane"/>
    <property type="evidence" value="ECO:0007669"/>
    <property type="project" value="UniProtKB-SubCell"/>
</dbReference>
<dbReference type="GO" id="GO:0106430">
    <property type="term" value="F:dihydroorotate dehydrogenase (quinone) activity"/>
    <property type="evidence" value="ECO:0007669"/>
    <property type="project" value="UniProtKB-EC"/>
</dbReference>
<dbReference type="GO" id="GO:0006207">
    <property type="term" value="P:'de novo' pyrimidine nucleobase biosynthetic process"/>
    <property type="evidence" value="ECO:0007669"/>
    <property type="project" value="InterPro"/>
</dbReference>
<dbReference type="GO" id="GO:0044205">
    <property type="term" value="P:'de novo' UMP biosynthetic process"/>
    <property type="evidence" value="ECO:0007669"/>
    <property type="project" value="UniProtKB-UniRule"/>
</dbReference>
<dbReference type="CDD" id="cd04738">
    <property type="entry name" value="DHOD_2_like"/>
    <property type="match status" value="1"/>
</dbReference>
<dbReference type="FunFam" id="3.20.20.70:FF:000028">
    <property type="entry name" value="Dihydroorotate dehydrogenase (quinone)"/>
    <property type="match status" value="1"/>
</dbReference>
<dbReference type="Gene3D" id="3.20.20.70">
    <property type="entry name" value="Aldolase class I"/>
    <property type="match status" value="1"/>
</dbReference>
<dbReference type="HAMAP" id="MF_00225">
    <property type="entry name" value="DHO_dh_type2"/>
    <property type="match status" value="1"/>
</dbReference>
<dbReference type="InterPro" id="IPR013785">
    <property type="entry name" value="Aldolase_TIM"/>
</dbReference>
<dbReference type="InterPro" id="IPR050074">
    <property type="entry name" value="DHO_dehydrogenase"/>
</dbReference>
<dbReference type="InterPro" id="IPR012135">
    <property type="entry name" value="Dihydroorotate_DH_1_2"/>
</dbReference>
<dbReference type="InterPro" id="IPR005719">
    <property type="entry name" value="Dihydroorotate_DH_2"/>
</dbReference>
<dbReference type="InterPro" id="IPR005720">
    <property type="entry name" value="Dihydroorotate_DH_cat"/>
</dbReference>
<dbReference type="InterPro" id="IPR001295">
    <property type="entry name" value="Dihydroorotate_DH_CS"/>
</dbReference>
<dbReference type="NCBIfam" id="NF003644">
    <property type="entry name" value="PRK05286.1-1"/>
    <property type="match status" value="1"/>
</dbReference>
<dbReference type="NCBIfam" id="NF003645">
    <property type="entry name" value="PRK05286.1-2"/>
    <property type="match status" value="1"/>
</dbReference>
<dbReference type="NCBIfam" id="NF003646">
    <property type="entry name" value="PRK05286.1-4"/>
    <property type="match status" value="1"/>
</dbReference>
<dbReference type="NCBIfam" id="NF003652">
    <property type="entry name" value="PRK05286.2-5"/>
    <property type="match status" value="1"/>
</dbReference>
<dbReference type="NCBIfam" id="TIGR01036">
    <property type="entry name" value="pyrD_sub2"/>
    <property type="match status" value="1"/>
</dbReference>
<dbReference type="PANTHER" id="PTHR48109:SF4">
    <property type="entry name" value="DIHYDROOROTATE DEHYDROGENASE (QUINONE), MITOCHONDRIAL"/>
    <property type="match status" value="1"/>
</dbReference>
<dbReference type="PANTHER" id="PTHR48109">
    <property type="entry name" value="DIHYDROOROTATE DEHYDROGENASE (QUINONE), MITOCHONDRIAL-RELATED"/>
    <property type="match status" value="1"/>
</dbReference>
<dbReference type="Pfam" id="PF01180">
    <property type="entry name" value="DHO_dh"/>
    <property type="match status" value="1"/>
</dbReference>
<dbReference type="PIRSF" id="PIRSF000164">
    <property type="entry name" value="DHO_oxidase"/>
    <property type="match status" value="1"/>
</dbReference>
<dbReference type="SUPFAM" id="SSF51395">
    <property type="entry name" value="FMN-linked oxidoreductases"/>
    <property type="match status" value="1"/>
</dbReference>
<dbReference type="PROSITE" id="PS00911">
    <property type="entry name" value="DHODEHASE_1"/>
    <property type="match status" value="1"/>
</dbReference>
<dbReference type="PROSITE" id="PS00912">
    <property type="entry name" value="DHODEHASE_2"/>
    <property type="match status" value="1"/>
</dbReference>
<accession>C4ZQ71</accession>
<evidence type="ECO:0000255" key="1">
    <source>
        <dbReference type="HAMAP-Rule" id="MF_00225"/>
    </source>
</evidence>
<gene>
    <name evidence="1" type="primary">pyrD</name>
    <name type="ordered locus">BWG_0797</name>
</gene>
<proteinExistence type="inferred from homology"/>